<keyword id="KW-0067">ATP-binding</keyword>
<keyword id="KW-0131">Cell cycle</keyword>
<keyword id="KW-0137">Centromere</keyword>
<keyword id="KW-0158">Chromosome</keyword>
<keyword id="KW-0159">Chromosome partition</keyword>
<keyword id="KW-0963">Cytoplasm</keyword>
<keyword id="KW-0206">Cytoskeleton</keyword>
<keyword id="KW-0418">Kinase</keyword>
<keyword id="KW-0995">Kinetochore</keyword>
<keyword id="KW-0547">Nucleotide-binding</keyword>
<keyword id="KW-0539">Nucleus</keyword>
<keyword id="KW-0597">Phosphoprotein</keyword>
<keyword id="KW-1185">Reference proteome</keyword>
<keyword id="KW-0723">Serine/threonine-protein kinase</keyword>
<keyword id="KW-0808">Transferase</keyword>
<accession>P38991</accession>
<accession>D6W3G1</accession>
<feature type="chain" id="PRO_0000086029" description="Aurora kinase">
    <location>
        <begin position="1"/>
        <end position="367"/>
    </location>
</feature>
<feature type="domain" description="Protein kinase" evidence="2">
    <location>
        <begin position="104"/>
        <end position="355"/>
    </location>
</feature>
<feature type="region of interest" description="Disordered" evidence="4">
    <location>
        <begin position="1"/>
        <end position="52"/>
    </location>
</feature>
<feature type="compositionally biased region" description="Polar residues" evidence="4">
    <location>
        <begin position="1"/>
        <end position="29"/>
    </location>
</feature>
<feature type="compositionally biased region" description="Polar residues" evidence="4">
    <location>
        <begin position="37"/>
        <end position="48"/>
    </location>
</feature>
<feature type="active site" description="Proton acceptor" evidence="2 3">
    <location>
        <position position="227"/>
    </location>
</feature>
<feature type="binding site" evidence="2">
    <location>
        <begin position="110"/>
        <end position="118"/>
    </location>
    <ligand>
        <name>ATP</name>
        <dbReference type="ChEBI" id="CHEBI:30616"/>
    </ligand>
</feature>
<feature type="binding site" evidence="2">
    <location>
        <position position="133"/>
    </location>
    <ligand>
        <name>ATP</name>
        <dbReference type="ChEBI" id="CHEBI:30616"/>
    </ligand>
</feature>
<feature type="modified residue" description="Phosphoserine; by autocatalysis" evidence="8">
    <location>
        <position position="5"/>
    </location>
</feature>
<feature type="modified residue" description="Phosphoserine" evidence="8">
    <location>
        <position position="76"/>
    </location>
</feature>
<feature type="modified residue" description="Phosphothreonine; by autocatalysis" evidence="8">
    <location>
        <position position="260"/>
    </location>
</feature>
<feature type="mutagenesis site" description="In IPL1-4; causes missegregation of chromosomes at 37 degrees Celsius." evidence="13">
    <original>T</original>
    <variation>A</variation>
    <location>
        <position position="260"/>
    </location>
</feature>
<feature type="mutagenesis site" description="In IPL1-1; causes missegregation of chromosomes at 37 degrees Celsius." evidence="13">
    <original>P</original>
    <variation>L</variation>
    <location>
        <position position="340"/>
    </location>
</feature>
<feature type="mutagenesis site" description="In IPL1-2; causes missegregation of chromosomes at 37 degrees Celsius." evidence="13">
    <original>H</original>
    <variation>Y</variation>
    <location>
        <position position="352"/>
    </location>
</feature>
<comment type="function">
    <text evidence="5 6 7 8 10 11 12">Component of the chromosomal passenger complex (CPC), a complex that acts as a key regulator of chromosome segregation and cytokinesis (PubMed:11853667, PubMed:12408861). Has a role in error-correction of aberrent kinetochore-microtubule attachments to ensure that sister kinetochores become bioriented and connect to opposite poles by promoting spindle assembly checkpoint signaling (PubMed:11724818, PubMed:11853667, PubMed:12408861). Acts in opposition to the phosphatase PP1 (PubMed:10975519). Not required for kinetochore detachment from microtubules during replication of centromeric DNA (PubMed:18079178). Phosphorylates histone H3 to form H3S10ph during mitosis and meiosis (PubMed:10975519). Phosphorylates CNN1, which contributes to the enrichment of CNN1 on anaphase kinetochores (PubMed:22561345). Phosphorylates RGD1 (PubMed:23454383).</text>
</comment>
<comment type="catalytic activity">
    <reaction evidence="5 11">
        <text>L-seryl-[protein] + ATP = O-phospho-L-seryl-[protein] + ADP + H(+)</text>
        <dbReference type="Rhea" id="RHEA:17989"/>
        <dbReference type="Rhea" id="RHEA-COMP:9863"/>
        <dbReference type="Rhea" id="RHEA-COMP:11604"/>
        <dbReference type="ChEBI" id="CHEBI:15378"/>
        <dbReference type="ChEBI" id="CHEBI:29999"/>
        <dbReference type="ChEBI" id="CHEBI:30616"/>
        <dbReference type="ChEBI" id="CHEBI:83421"/>
        <dbReference type="ChEBI" id="CHEBI:456216"/>
        <dbReference type="EC" id="2.7.11.1"/>
    </reaction>
</comment>
<comment type="catalytic activity">
    <reaction>
        <text>L-threonyl-[protein] + ATP = O-phospho-L-threonyl-[protein] + ADP + H(+)</text>
        <dbReference type="Rhea" id="RHEA:46608"/>
        <dbReference type="Rhea" id="RHEA-COMP:11060"/>
        <dbReference type="Rhea" id="RHEA-COMP:11605"/>
        <dbReference type="ChEBI" id="CHEBI:15378"/>
        <dbReference type="ChEBI" id="CHEBI:30013"/>
        <dbReference type="ChEBI" id="CHEBI:30616"/>
        <dbReference type="ChEBI" id="CHEBI:61977"/>
        <dbReference type="ChEBI" id="CHEBI:456216"/>
        <dbReference type="EC" id="2.7.11.1"/>
    </reaction>
</comment>
<comment type="subunit">
    <text evidence="1">Component of the CPC complex at least composed of IPL1, BIR1 and SLI15.</text>
</comment>
<comment type="interaction">
    <interactant intactId="EBI-9319">
        <id>P38991</id>
    </interactant>
    <interactant intactId="EBI-3648">
        <id>P47134</id>
        <label>BIR1</label>
    </interactant>
    <organismsDiffer>false</organismsDiffer>
    <experiments>4</experiments>
</comment>
<comment type="interaction">
    <interactant intactId="EBI-9319">
        <id>P38991</id>
    </interactant>
    <interactant intactId="EBI-20842">
        <id>P38283</id>
        <label>SLI15</label>
    </interactant>
    <organismsDiffer>false</organismsDiffer>
    <experiments>10</experiments>
</comment>
<comment type="interaction">
    <interactant intactId="EBI-9319">
        <id>P38991</id>
    </interactant>
    <interactant intactId="EBI-79722">
        <id>P68431</id>
        <label>H3C12</label>
    </interactant>
    <organismsDiffer>true</organismsDiffer>
    <experiments>2</experiments>
</comment>
<comment type="subcellular location">
    <subcellularLocation>
        <location>Nucleus</location>
    </subcellularLocation>
    <subcellularLocation>
        <location>Cytoplasm</location>
        <location>Cytoskeleton</location>
        <location>Spindle</location>
    </subcellularLocation>
    <subcellularLocation>
        <location>Chromosome</location>
        <location>Centromere</location>
        <location>Kinetochore</location>
    </subcellularLocation>
    <text>Associates with the mitotic spindle and on elongated and disassembling spindles. Also associated with the kinetochore.</text>
</comment>
<comment type="miscellaneous">
    <text evidence="9">Present with 149 molecules/cell in log phase SD medium.</text>
</comment>
<comment type="similarity">
    <text evidence="2">Belongs to the protein kinase superfamily. Ser/Thr protein kinase family. Aurora subfamily.</text>
</comment>
<dbReference type="EC" id="2.7.11.1" evidence="5 11 12"/>
<dbReference type="EMBL" id="U07163">
    <property type="protein sequence ID" value="AAA20496.1"/>
    <property type="molecule type" value="Genomic_DNA"/>
</dbReference>
<dbReference type="EMBL" id="Z73565">
    <property type="protein sequence ID" value="CAA97924.1"/>
    <property type="molecule type" value="Genomic_DNA"/>
</dbReference>
<dbReference type="EMBL" id="AY693182">
    <property type="protein sequence ID" value="AAT93201.1"/>
    <property type="molecule type" value="Genomic_DNA"/>
</dbReference>
<dbReference type="EMBL" id="BK006949">
    <property type="protein sequence ID" value="DAA11227.1"/>
    <property type="molecule type" value="Genomic_DNA"/>
</dbReference>
<dbReference type="PIR" id="S47923">
    <property type="entry name" value="S47923"/>
</dbReference>
<dbReference type="RefSeq" id="NP_015115.1">
    <property type="nucleotide sequence ID" value="NM_001184023.1"/>
</dbReference>
<dbReference type="SMR" id="P38991"/>
<dbReference type="BioGRID" id="35976">
    <property type="interactions" value="513"/>
</dbReference>
<dbReference type="ComplexPortal" id="CPX-1900">
    <property type="entry name" value="Chromosomal passenger complex"/>
</dbReference>
<dbReference type="DIP" id="DIP-2771N"/>
<dbReference type="FunCoup" id="P38991">
    <property type="interactions" value="1384"/>
</dbReference>
<dbReference type="IntAct" id="P38991">
    <property type="interactions" value="11"/>
</dbReference>
<dbReference type="MINT" id="P38991"/>
<dbReference type="STRING" id="4932.YPL209C"/>
<dbReference type="iPTMnet" id="P38991"/>
<dbReference type="PaxDb" id="4932-YPL209C"/>
<dbReference type="PeptideAtlas" id="P38991"/>
<dbReference type="EnsemblFungi" id="YPL209C_mRNA">
    <property type="protein sequence ID" value="YPL209C"/>
    <property type="gene ID" value="YPL209C"/>
</dbReference>
<dbReference type="GeneID" id="855892"/>
<dbReference type="KEGG" id="sce:YPL209C"/>
<dbReference type="AGR" id="SGD:S000006130"/>
<dbReference type="SGD" id="S000006130">
    <property type="gene designation" value="IPL1"/>
</dbReference>
<dbReference type="VEuPathDB" id="FungiDB:YPL209C"/>
<dbReference type="eggNOG" id="KOG0580">
    <property type="taxonomic scope" value="Eukaryota"/>
</dbReference>
<dbReference type="HOGENOM" id="CLU_000288_63_6_1"/>
<dbReference type="InParanoid" id="P38991"/>
<dbReference type="OMA" id="ESRFPEW"/>
<dbReference type="OrthoDB" id="377346at2759"/>
<dbReference type="BioCyc" id="YEAST:G3O-34100-MONOMER"/>
<dbReference type="BRENDA" id="2.7.11.1">
    <property type="organism ID" value="984"/>
</dbReference>
<dbReference type="Reactome" id="R-SCE-8854050">
    <property type="pathway name" value="FBXL7 down-regulates AURKA during mitotic entry and in early mitosis"/>
</dbReference>
<dbReference type="BioGRID-ORCS" id="855892">
    <property type="hits" value="3 hits in 13 CRISPR screens"/>
</dbReference>
<dbReference type="PRO" id="PR:P38991"/>
<dbReference type="Proteomes" id="UP000002311">
    <property type="component" value="Chromosome XVI"/>
</dbReference>
<dbReference type="RNAct" id="P38991">
    <property type="molecule type" value="protein"/>
</dbReference>
<dbReference type="GO" id="GO:0032133">
    <property type="term" value="C:chromosome passenger complex"/>
    <property type="evidence" value="ECO:0000314"/>
    <property type="project" value="SGD"/>
</dbReference>
<dbReference type="GO" id="GO:0005737">
    <property type="term" value="C:cytoplasm"/>
    <property type="evidence" value="ECO:0007005"/>
    <property type="project" value="SGD"/>
</dbReference>
<dbReference type="GO" id="GO:0000776">
    <property type="term" value="C:kinetochore"/>
    <property type="evidence" value="ECO:0000314"/>
    <property type="project" value="SGD"/>
</dbReference>
<dbReference type="GO" id="GO:0005828">
    <property type="term" value="C:kinetochore microtubule"/>
    <property type="evidence" value="ECO:0000314"/>
    <property type="project" value="SGD"/>
</dbReference>
<dbReference type="GO" id="GO:0005874">
    <property type="term" value="C:microtubule"/>
    <property type="evidence" value="ECO:0007005"/>
    <property type="project" value="SGD"/>
</dbReference>
<dbReference type="GO" id="GO:0005634">
    <property type="term" value="C:nucleus"/>
    <property type="evidence" value="ECO:0007005"/>
    <property type="project" value="SGD"/>
</dbReference>
<dbReference type="GO" id="GO:0005819">
    <property type="term" value="C:spindle"/>
    <property type="evidence" value="ECO:0000314"/>
    <property type="project" value="SGD"/>
</dbReference>
<dbReference type="GO" id="GO:0005876">
    <property type="term" value="C:spindle microtubule"/>
    <property type="evidence" value="ECO:0000314"/>
    <property type="project" value="SGD"/>
</dbReference>
<dbReference type="GO" id="GO:0051233">
    <property type="term" value="C:spindle midzone"/>
    <property type="evidence" value="ECO:0000314"/>
    <property type="project" value="SGD"/>
</dbReference>
<dbReference type="GO" id="GO:0000922">
    <property type="term" value="C:spindle pole"/>
    <property type="evidence" value="ECO:0000318"/>
    <property type="project" value="GO_Central"/>
</dbReference>
<dbReference type="GO" id="GO:0005524">
    <property type="term" value="F:ATP binding"/>
    <property type="evidence" value="ECO:0007669"/>
    <property type="project" value="UniProtKB-KW"/>
</dbReference>
<dbReference type="GO" id="GO:0004672">
    <property type="term" value="F:protein kinase activity"/>
    <property type="evidence" value="ECO:0000314"/>
    <property type="project" value="SGD"/>
</dbReference>
<dbReference type="GO" id="GO:0106310">
    <property type="term" value="F:protein serine kinase activity"/>
    <property type="evidence" value="ECO:0007669"/>
    <property type="project" value="RHEA"/>
</dbReference>
<dbReference type="GO" id="GO:0004674">
    <property type="term" value="F:protein serine/threonine kinase activity"/>
    <property type="evidence" value="ECO:0000314"/>
    <property type="project" value="UniProtKB"/>
</dbReference>
<dbReference type="GO" id="GO:0051316">
    <property type="term" value="P:attachment of meiotic spindle microtubules to kinetochore"/>
    <property type="evidence" value="ECO:0000303"/>
    <property type="project" value="ComplexPortal"/>
</dbReference>
<dbReference type="GO" id="GO:0008608">
    <property type="term" value="P:attachment of spindle microtubules to kinetochore"/>
    <property type="evidence" value="ECO:0000315"/>
    <property type="project" value="SGD"/>
</dbReference>
<dbReference type="GO" id="GO:0007059">
    <property type="term" value="P:chromosome segregation"/>
    <property type="evidence" value="ECO:0000315"/>
    <property type="project" value="SGD"/>
</dbReference>
<dbReference type="GO" id="GO:0045143">
    <property type="term" value="P:homologous chromosome segregation"/>
    <property type="evidence" value="ECO:0000315"/>
    <property type="project" value="SGD"/>
</dbReference>
<dbReference type="GO" id="GO:0045144">
    <property type="term" value="P:meiotic sister chromatid segregation"/>
    <property type="evidence" value="ECO:0000315"/>
    <property type="project" value="SGD"/>
</dbReference>
<dbReference type="GO" id="GO:0044779">
    <property type="term" value="P:meiotic spindle checkpoint signaling"/>
    <property type="evidence" value="ECO:0000316"/>
    <property type="project" value="SGD"/>
</dbReference>
<dbReference type="GO" id="GO:0044774">
    <property type="term" value="P:mitotic DNA integrity checkpoint signaling"/>
    <property type="evidence" value="ECO:0000316"/>
    <property type="project" value="SGD"/>
</dbReference>
<dbReference type="GO" id="GO:0051228">
    <property type="term" value="P:mitotic spindle disassembly"/>
    <property type="evidence" value="ECO:0000315"/>
    <property type="project" value="SGD"/>
</dbReference>
<dbReference type="GO" id="GO:0007052">
    <property type="term" value="P:mitotic spindle organization"/>
    <property type="evidence" value="ECO:0000318"/>
    <property type="project" value="GO_Central"/>
</dbReference>
<dbReference type="GO" id="GO:1901925">
    <property type="term" value="P:negative regulation of protein import into nucleus during spindle assembly checkpoint"/>
    <property type="evidence" value="ECO:0000315"/>
    <property type="project" value="SGD"/>
</dbReference>
<dbReference type="GO" id="GO:0018105">
    <property type="term" value="P:peptidyl-serine phosphorylation"/>
    <property type="evidence" value="ECO:0000314"/>
    <property type="project" value="CACAO"/>
</dbReference>
<dbReference type="GO" id="GO:0018107">
    <property type="term" value="P:peptidyl-threonine phosphorylation"/>
    <property type="evidence" value="ECO:0000314"/>
    <property type="project" value="CACAO"/>
</dbReference>
<dbReference type="GO" id="GO:0090267">
    <property type="term" value="P:positive regulation of mitotic cell cycle spindle assembly checkpoint"/>
    <property type="evidence" value="ECO:0000303"/>
    <property type="project" value="ComplexPortal"/>
</dbReference>
<dbReference type="GO" id="GO:0032465">
    <property type="term" value="P:regulation of cytokinesis"/>
    <property type="evidence" value="ECO:0000315"/>
    <property type="project" value="SGD"/>
</dbReference>
<dbReference type="GO" id="GO:0090266">
    <property type="term" value="P:regulation of mitotic cell cycle spindle assembly checkpoint"/>
    <property type="evidence" value="ECO:0000315"/>
    <property type="project" value="SGD"/>
</dbReference>
<dbReference type="GO" id="GO:1901673">
    <property type="term" value="P:regulation of mitotic spindle assembly"/>
    <property type="evidence" value="ECO:0000315"/>
    <property type="project" value="SGD"/>
</dbReference>
<dbReference type="GO" id="GO:0031134">
    <property type="term" value="P:sister chromatid biorientation"/>
    <property type="evidence" value="ECO:0000303"/>
    <property type="project" value="ComplexPortal"/>
</dbReference>
<dbReference type="CDD" id="cd14007">
    <property type="entry name" value="STKc_Aurora"/>
    <property type="match status" value="1"/>
</dbReference>
<dbReference type="FunFam" id="3.30.200.20:FF:000042">
    <property type="entry name" value="Aurora kinase A"/>
    <property type="match status" value="1"/>
</dbReference>
<dbReference type="FunFam" id="1.10.510.10:FF:000235">
    <property type="entry name" value="Serine/threonine-protein kinase ark1"/>
    <property type="match status" value="1"/>
</dbReference>
<dbReference type="Gene3D" id="1.10.510.10">
    <property type="entry name" value="Transferase(Phosphotransferase) domain 1"/>
    <property type="match status" value="1"/>
</dbReference>
<dbReference type="InterPro" id="IPR030616">
    <property type="entry name" value="Aur-like"/>
</dbReference>
<dbReference type="InterPro" id="IPR011009">
    <property type="entry name" value="Kinase-like_dom_sf"/>
</dbReference>
<dbReference type="InterPro" id="IPR000719">
    <property type="entry name" value="Prot_kinase_dom"/>
</dbReference>
<dbReference type="InterPro" id="IPR017441">
    <property type="entry name" value="Protein_kinase_ATP_BS"/>
</dbReference>
<dbReference type="InterPro" id="IPR008271">
    <property type="entry name" value="Ser/Thr_kinase_AS"/>
</dbReference>
<dbReference type="PANTHER" id="PTHR24350">
    <property type="entry name" value="SERINE/THREONINE-PROTEIN KINASE IAL-RELATED"/>
    <property type="match status" value="1"/>
</dbReference>
<dbReference type="Pfam" id="PF00069">
    <property type="entry name" value="Pkinase"/>
    <property type="match status" value="1"/>
</dbReference>
<dbReference type="SMART" id="SM00220">
    <property type="entry name" value="S_TKc"/>
    <property type="match status" value="1"/>
</dbReference>
<dbReference type="SUPFAM" id="SSF56112">
    <property type="entry name" value="Protein kinase-like (PK-like)"/>
    <property type="match status" value="1"/>
</dbReference>
<dbReference type="PROSITE" id="PS00107">
    <property type="entry name" value="PROTEIN_KINASE_ATP"/>
    <property type="match status" value="1"/>
</dbReference>
<dbReference type="PROSITE" id="PS50011">
    <property type="entry name" value="PROTEIN_KINASE_DOM"/>
    <property type="match status" value="1"/>
</dbReference>
<dbReference type="PROSITE" id="PS00108">
    <property type="entry name" value="PROTEIN_KINASE_ST"/>
    <property type="match status" value="1"/>
</dbReference>
<reference key="1">
    <citation type="journal article" date="1994" name="Mol. Cell. Biol.">
        <title>Type 1 protein phosphatase acts in opposition to Ipl1 protein kinase in regulating yeast chromosome segregation.</title>
        <authorList>
            <person name="Francisco L."/>
            <person name="Wang W."/>
            <person name="Chan C.S.M."/>
        </authorList>
    </citation>
    <scope>NUCLEOTIDE SEQUENCE [GENOMIC DNA]</scope>
    <scope>MUTAGENESIS OF THR-260; PRO-340 AND HIS-352</scope>
    <source>
        <strain>ATCC 204508 / S288c</strain>
    </source>
</reference>
<reference key="2">
    <citation type="journal article" date="1997" name="Nature">
        <title>The nucleotide sequence of Saccharomyces cerevisiae chromosome XVI.</title>
        <authorList>
            <person name="Bussey H."/>
            <person name="Storms R.K."/>
            <person name="Ahmed A."/>
            <person name="Albermann K."/>
            <person name="Allen E."/>
            <person name="Ansorge W."/>
            <person name="Araujo R."/>
            <person name="Aparicio A."/>
            <person name="Barrell B.G."/>
            <person name="Badcock K."/>
            <person name="Benes V."/>
            <person name="Botstein D."/>
            <person name="Bowman S."/>
            <person name="Brueckner M."/>
            <person name="Carpenter J."/>
            <person name="Cherry J.M."/>
            <person name="Chung E."/>
            <person name="Churcher C.M."/>
            <person name="Coster F."/>
            <person name="Davis K."/>
            <person name="Davis R.W."/>
            <person name="Dietrich F.S."/>
            <person name="Delius H."/>
            <person name="DiPaolo T."/>
            <person name="Dubois E."/>
            <person name="Duesterhoeft A."/>
            <person name="Duncan M."/>
            <person name="Floeth M."/>
            <person name="Fortin N."/>
            <person name="Friesen J.D."/>
            <person name="Fritz C."/>
            <person name="Goffeau A."/>
            <person name="Hall J."/>
            <person name="Hebling U."/>
            <person name="Heumann K."/>
            <person name="Hilbert H."/>
            <person name="Hillier L.W."/>
            <person name="Hunicke-Smith S."/>
            <person name="Hyman R.W."/>
            <person name="Johnston M."/>
            <person name="Kalman S."/>
            <person name="Kleine K."/>
            <person name="Komp C."/>
            <person name="Kurdi O."/>
            <person name="Lashkari D."/>
            <person name="Lew H."/>
            <person name="Lin A."/>
            <person name="Lin D."/>
            <person name="Louis E.J."/>
            <person name="Marathe R."/>
            <person name="Messenguy F."/>
            <person name="Mewes H.-W."/>
            <person name="Mirtipati S."/>
            <person name="Moestl D."/>
            <person name="Mueller-Auer S."/>
            <person name="Namath A."/>
            <person name="Nentwich U."/>
            <person name="Oefner P."/>
            <person name="Pearson D."/>
            <person name="Petel F.X."/>
            <person name="Pohl T.M."/>
            <person name="Purnelle B."/>
            <person name="Rajandream M.A."/>
            <person name="Rechmann S."/>
            <person name="Rieger M."/>
            <person name="Riles L."/>
            <person name="Roberts D."/>
            <person name="Schaefer M."/>
            <person name="Scharfe M."/>
            <person name="Scherens B."/>
            <person name="Schramm S."/>
            <person name="Schroeder M."/>
            <person name="Sdicu A.-M."/>
            <person name="Tettelin H."/>
            <person name="Urrestarazu L.A."/>
            <person name="Ushinsky S."/>
            <person name="Vierendeels F."/>
            <person name="Vissers S."/>
            <person name="Voss H."/>
            <person name="Walsh S.V."/>
            <person name="Wambutt R."/>
            <person name="Wang Y."/>
            <person name="Wedler E."/>
            <person name="Wedler H."/>
            <person name="Winnett E."/>
            <person name="Zhong W.-W."/>
            <person name="Zollner A."/>
            <person name="Vo D.H."/>
            <person name="Hani J."/>
        </authorList>
    </citation>
    <scope>NUCLEOTIDE SEQUENCE [LARGE SCALE GENOMIC DNA]</scope>
    <source>
        <strain>ATCC 204508 / S288c</strain>
    </source>
</reference>
<reference key="3">
    <citation type="journal article" date="2014" name="G3 (Bethesda)">
        <title>The reference genome sequence of Saccharomyces cerevisiae: Then and now.</title>
        <authorList>
            <person name="Engel S.R."/>
            <person name="Dietrich F.S."/>
            <person name="Fisk D.G."/>
            <person name="Binkley G."/>
            <person name="Balakrishnan R."/>
            <person name="Costanzo M.C."/>
            <person name="Dwight S.S."/>
            <person name="Hitz B.C."/>
            <person name="Karra K."/>
            <person name="Nash R.S."/>
            <person name="Weng S."/>
            <person name="Wong E.D."/>
            <person name="Lloyd P."/>
            <person name="Skrzypek M.S."/>
            <person name="Miyasato S.R."/>
            <person name="Simison M."/>
            <person name="Cherry J.M."/>
        </authorList>
    </citation>
    <scope>GENOME REANNOTATION</scope>
    <source>
        <strain>ATCC 204508 / S288c</strain>
    </source>
</reference>
<reference key="4">
    <citation type="journal article" date="2007" name="Genome Res.">
        <title>Approaching a complete repository of sequence-verified protein-encoding clones for Saccharomyces cerevisiae.</title>
        <authorList>
            <person name="Hu Y."/>
            <person name="Rolfs A."/>
            <person name="Bhullar B."/>
            <person name="Murthy T.V.S."/>
            <person name="Zhu C."/>
            <person name="Berger M.F."/>
            <person name="Camargo A.A."/>
            <person name="Kelley F."/>
            <person name="McCarron S."/>
            <person name="Jepson D."/>
            <person name="Richardson A."/>
            <person name="Raphael J."/>
            <person name="Moreira D."/>
            <person name="Taycher E."/>
            <person name="Zuo D."/>
            <person name="Mohr S."/>
            <person name="Kane M.F."/>
            <person name="Williamson J."/>
            <person name="Simpson A.J.G."/>
            <person name="Bulyk M.L."/>
            <person name="Harlow E."/>
            <person name="Marsischky G."/>
            <person name="Kolodner R.D."/>
            <person name="LaBaer J."/>
        </authorList>
    </citation>
    <scope>NUCLEOTIDE SEQUENCE [GENOMIC DNA]</scope>
    <source>
        <strain>ATCC 204508 / S288c</strain>
    </source>
</reference>
<reference key="5">
    <citation type="journal article" date="1999" name="J. Cell Biol.">
        <title>Sli15 associates with the ipl1 protein kinase to promote proper chromosome segregation in Saccharomyces cerevisiae.</title>
        <authorList>
            <person name="Kim J.-H."/>
            <person name="Kang J.-S."/>
            <person name="Chan C.S.M."/>
        </authorList>
    </citation>
    <scope>SUBCELLULAR LOCATION</scope>
</reference>
<reference key="6">
    <citation type="journal article" date="2000" name="Cell">
        <title>Mitotic phosphorylation of histone H3 is governed by Ipl1/aurora kinase and Glc7/PP1 phosphatase in budding yeast and nematodes.</title>
        <authorList>
            <person name="Hsu J.-Y."/>
            <person name="Sun Z.-W."/>
            <person name="Li X."/>
            <person name="Reuben M."/>
            <person name="Tatchell K."/>
            <person name="Bishop D.K."/>
            <person name="Grushcow J.M."/>
            <person name="Brame C.J."/>
            <person name="Caldwell J.A."/>
            <person name="Hunt D.F."/>
            <person name="Lin R."/>
            <person name="Smith M.M."/>
            <person name="Allis C.D."/>
        </authorList>
    </citation>
    <scope>FUNCTION IN PHOSPHORYLATION OF HISTONE H3</scope>
    <scope>CATALYTIC ACTIVITY</scope>
</reference>
<reference key="7">
    <citation type="journal article" date="2001" name="J. Cell Biol.">
        <title>Functional cooperation of Dam1, Ipl1, and the inner centromere protein (INCENP)-related protein Sli15 during chromosome segregation.</title>
        <authorList>
            <person name="Kang J.-S."/>
            <person name="Cheeseman I.M."/>
            <person name="Kallstrom G."/>
            <person name="Velmurugan S."/>
            <person name="Barnes G."/>
            <person name="Chan C.S.M."/>
        </authorList>
    </citation>
    <scope>FUNCTION</scope>
    <scope>SUBCELLULAR LOCATION</scope>
</reference>
<reference key="8">
    <citation type="journal article" date="2002" name="Cell">
        <title>Evidence that the Ipl1-Sli15 (Aurora kinase-INCENP) complex promotes chromosome bi-orientation by altering kinetochore-spindle pole connections.</title>
        <authorList>
            <person name="Tanaka T.U."/>
            <person name="Rachidi N."/>
            <person name="Janke C."/>
            <person name="Pereira G."/>
            <person name="Galova M."/>
            <person name="Schiebel E."/>
            <person name="Stark M.J.R."/>
            <person name="Nasmyth K."/>
        </authorList>
    </citation>
    <scope>FUNCTION</scope>
</reference>
<reference key="9">
    <citation type="journal article" date="2002" name="Cell">
        <title>Phospho-regulation of kinetochore-microtubule attachments by the Aurora kinase Ipl1p.</title>
        <authorList>
            <person name="Cheeseman I.M."/>
            <person name="Anderson S."/>
            <person name="Jwa M."/>
            <person name="Green E.M."/>
            <person name="Kang J.-S."/>
            <person name="Yates J.R. III"/>
            <person name="Chan C.S.M."/>
            <person name="Drubin D.G."/>
            <person name="Barnes G."/>
        </authorList>
    </citation>
    <scope>FUNCTION</scope>
    <scope>PHOSPHORYLATION AT SER-5; SER-76 AND THR-260</scope>
</reference>
<reference key="10">
    <citation type="journal article" date="2003" name="Nature">
        <title>Global analysis of protein expression in yeast.</title>
        <authorList>
            <person name="Ghaemmaghami S."/>
            <person name="Huh W.-K."/>
            <person name="Bower K."/>
            <person name="Howson R.W."/>
            <person name="Belle A."/>
            <person name="Dephoure N."/>
            <person name="O'Shea E.K."/>
            <person name="Weissman J.S."/>
        </authorList>
    </citation>
    <scope>LEVEL OF PROTEIN EXPRESSION [LARGE SCALE ANALYSIS]</scope>
</reference>
<reference key="11">
    <citation type="journal article" date="2007" name="Genes Dev.">
        <title>Kinetochore microtubule interaction during S phase in Saccharomyces cerevisiae.</title>
        <authorList>
            <person name="Kitamura E."/>
            <person name="Tanaka K."/>
            <person name="Kitamura Y."/>
            <person name="Tanaka T.U."/>
        </authorList>
    </citation>
    <scope>FUNCTION</scope>
</reference>
<reference key="12">
    <citation type="journal article" date="2007" name="Proc. Natl. Acad. Sci. U.S.A.">
        <title>Analysis of phosphorylation sites on proteins from Saccharomyces cerevisiae by electron transfer dissociation (ETD) mass spectrometry.</title>
        <authorList>
            <person name="Chi A."/>
            <person name="Huttenhower C."/>
            <person name="Geer L.Y."/>
            <person name="Coon J.J."/>
            <person name="Syka J.E.P."/>
            <person name="Bai D.L."/>
            <person name="Shabanowitz J."/>
            <person name="Burke D.J."/>
            <person name="Troyanskaya O.G."/>
            <person name="Hunt D.F."/>
        </authorList>
    </citation>
    <scope>IDENTIFICATION BY MASS SPECTROMETRY [LARGE SCALE ANALYSIS]</scope>
</reference>
<reference key="13">
    <citation type="journal article" date="2013" name="Biochem. Biophys. Res. Commun.">
        <title>The Saccharomyces cerevisiae RhoGAP Rgd1 is phosphorylated by the Aurora B like kinase Ipl1.</title>
        <authorList>
            <person name="Vieillemard A."/>
            <person name="Prouzet-Mauleon V."/>
            <person name="Hugues M."/>
            <person name="Lefebvre F."/>
            <person name="Mitteau R."/>
            <person name="Claverol S."/>
            <person name="Bonneu M."/>
            <person name="Crouzet M."/>
            <person name="Doignon F."/>
            <person name="Thoraval D."/>
        </authorList>
    </citation>
    <scope>FUNCTION</scope>
    <scope>CATALYTIC ACTIVITY</scope>
</reference>
<reference key="14">
    <citation type="journal article" date="2012" name="Nat. Cell Biol.">
        <title>Cnn1 inhibits the interactions between the KMN complexes of the yeast kinetochore.</title>
        <authorList>
            <person name="Bock L.J."/>
            <person name="Pagliuca C."/>
            <person name="Kobayashi N."/>
            <person name="Grove R.A."/>
            <person name="Oku Y."/>
            <person name="Shrestha K."/>
            <person name="Alfieri C."/>
            <person name="Golfieri C."/>
            <person name="Oldani A."/>
            <person name="Dal Maschio M."/>
            <person name="Bermejo R."/>
            <person name="Hazbun T.R."/>
            <person name="Tanaka T.U."/>
            <person name="De Wulf P."/>
        </authorList>
    </citation>
    <scope>FUNCTION</scope>
    <scope>CATALYTIC ACTIVITY</scope>
</reference>
<proteinExistence type="evidence at protein level"/>
<evidence type="ECO:0000250" key="1">
    <source>
        <dbReference type="UniProtKB" id="O59790"/>
    </source>
</evidence>
<evidence type="ECO:0000255" key="2">
    <source>
        <dbReference type="PROSITE-ProRule" id="PRU00159"/>
    </source>
</evidence>
<evidence type="ECO:0000255" key="3">
    <source>
        <dbReference type="PROSITE-ProRule" id="PRU10027"/>
    </source>
</evidence>
<evidence type="ECO:0000256" key="4">
    <source>
        <dbReference type="SAM" id="MobiDB-lite"/>
    </source>
</evidence>
<evidence type="ECO:0000269" key="5">
    <source>
    </source>
</evidence>
<evidence type="ECO:0000269" key="6">
    <source>
    </source>
</evidence>
<evidence type="ECO:0000269" key="7">
    <source>
    </source>
</evidence>
<evidence type="ECO:0000269" key="8">
    <source>
    </source>
</evidence>
<evidence type="ECO:0000269" key="9">
    <source>
    </source>
</evidence>
<evidence type="ECO:0000269" key="10">
    <source>
    </source>
</evidence>
<evidence type="ECO:0000269" key="11">
    <source>
    </source>
</evidence>
<evidence type="ECO:0000269" key="12">
    <source>
    </source>
</evidence>
<evidence type="ECO:0000269" key="13">
    <source>
    </source>
</evidence>
<organism>
    <name type="scientific">Saccharomyces cerevisiae (strain ATCC 204508 / S288c)</name>
    <name type="common">Baker's yeast</name>
    <dbReference type="NCBI Taxonomy" id="559292"/>
    <lineage>
        <taxon>Eukaryota</taxon>
        <taxon>Fungi</taxon>
        <taxon>Dikarya</taxon>
        <taxon>Ascomycota</taxon>
        <taxon>Saccharomycotina</taxon>
        <taxon>Saccharomycetes</taxon>
        <taxon>Saccharomycetales</taxon>
        <taxon>Saccharomycetaceae</taxon>
        <taxon>Saccharomyces</taxon>
    </lineage>
</organism>
<sequence>MQRNSLVNIKLNANSPSKKTTTRPNTSRINKPWRISHSPQQRNPNSKIPSPVREKLNRLPVNNKKFLDMESSKIPSPIRKATSSKMIHENKKLPKFKSLSLDDFELGKKLGKGKFGKVYCVRHRSTGYICALKVMEKEEIIKYNLQKQFRREVEIQTSLNHPNLTKSYGYFHDEKRVYLLMEYLVNGEMYKLLRLHGPFNDILASDYIYQIANALDYMHKKNIIHRDIKPENILIGFNNVIKLTDFGWSIINPPENRRKTVCGTIDYLSPEMVESREYDHTIDAWALGVLAFELLTGAPPFEEEMKDTTYKRIAALDIKMPSNISQDAQDLILKLLKYDPKDRMRLGDVKMHPWILRNKPFWENKRL</sequence>
<name>AURK_YEAST</name>
<protein>
    <recommendedName>
        <fullName>Aurora kinase</fullName>
        <ecNumber evidence="5 11 12">2.7.11.1</ecNumber>
    </recommendedName>
    <alternativeName>
        <fullName>Increase-in-ploidy protein 1</fullName>
    </alternativeName>
    <alternativeName>
        <fullName>Spindle assembly checkpoint kinase</fullName>
    </alternativeName>
</protein>
<gene>
    <name type="primary">IPL1</name>
    <name type="ordered locus">YPL209C</name>
</gene>